<keyword id="KW-1003">Cell membrane</keyword>
<keyword id="KW-0449">Lipoprotein</keyword>
<keyword id="KW-0472">Membrane</keyword>
<keyword id="KW-0564">Palmitate</keyword>
<keyword id="KW-1185">Reference proteome</keyword>
<keyword id="KW-0732">Signal</keyword>
<feature type="signal peptide" evidence="1">
    <location>
        <begin position="1"/>
        <end position="21"/>
    </location>
</feature>
<feature type="chain" id="PRO_0000014027" description="Uncharacterized lipoprotein MG095 homolog">
    <location>
        <begin position="22"/>
        <end position="454"/>
    </location>
</feature>
<feature type="region of interest" description="Disordered" evidence="2">
    <location>
        <begin position="55"/>
        <end position="87"/>
    </location>
</feature>
<feature type="compositionally biased region" description="Low complexity" evidence="2">
    <location>
        <begin position="55"/>
        <end position="64"/>
    </location>
</feature>
<feature type="compositionally biased region" description="Polar residues" evidence="2">
    <location>
        <begin position="65"/>
        <end position="87"/>
    </location>
</feature>
<feature type="lipid moiety-binding region" description="N-palmitoyl cysteine" evidence="1">
    <location>
        <position position="22"/>
    </location>
</feature>
<feature type="lipid moiety-binding region" description="S-diacylglycerol cysteine" evidence="1">
    <location>
        <position position="22"/>
    </location>
</feature>
<gene>
    <name type="ordered locus">MPN_233</name>
    <name type="ORF">G07_orf454</name>
    <name type="ORF">MP598</name>
</gene>
<proteinExistence type="inferred from homology"/>
<sequence length="454" mass="49820">MKYKTVKSIPLFLLGSIVFTACSTPQSTFHLPVQTTVSAIKKDISGKTATAVKAASSSSSTTTSNDDNNQKGYFLETNRSTGTYDPNNSTRLIKLGESGDFHAADQNKPEEALFERLYGGIASLLNFRIIKPALTYWNTVTPSLKAIGKSSNLITFSQDIDETELQRALANNLIVADDGNNNFWFGLKSLSFNSAKLTDNAQTQMAQKTTQAVTLKSQAQMSSTNTKNTNKKIDLRDKITLSSTMNTQGSGDNKNPSSGLIQKLVSVENIEAEFSFVKTGFNGNEIKFGDFVTENSPTTTQLKQVWKKKWGTELKKTNYKLQLNNFSLLLTYTPEVNKVEKGNNGDSNKGTIATPNGFSFLYPANLNETPSSSSSYWTNVTDLTKAATDTENTNLLNDLQKSQEQVNQFVAAITQNHLDVSEAALTKKQFGSLSISDFFKAIFKENGKDTKAKS</sequence>
<reference key="1">
    <citation type="journal article" date="1996" name="Nucleic Acids Res.">
        <title>Complete sequence analysis of the genome of the bacterium Mycoplasma pneumoniae.</title>
        <authorList>
            <person name="Himmelreich R."/>
            <person name="Hilbert H."/>
            <person name="Plagens H."/>
            <person name="Pirkl E."/>
            <person name="Li B.-C."/>
            <person name="Herrmann R."/>
        </authorList>
    </citation>
    <scope>NUCLEOTIDE SEQUENCE [LARGE SCALE GENOMIC DNA]</scope>
    <source>
        <strain>ATCC 29342 / M129 / Subtype 1</strain>
    </source>
</reference>
<name>Y233_MYCPN</name>
<evidence type="ECO:0000255" key="1">
    <source>
        <dbReference type="PROSITE-ProRule" id="PRU00303"/>
    </source>
</evidence>
<evidence type="ECO:0000256" key="2">
    <source>
        <dbReference type="SAM" id="MobiDB-lite"/>
    </source>
</evidence>
<organism>
    <name type="scientific">Mycoplasma pneumoniae (strain ATCC 29342 / M129 / Subtype 1)</name>
    <name type="common">Mycoplasmoides pneumoniae</name>
    <dbReference type="NCBI Taxonomy" id="272634"/>
    <lineage>
        <taxon>Bacteria</taxon>
        <taxon>Bacillati</taxon>
        <taxon>Mycoplasmatota</taxon>
        <taxon>Mycoplasmoidales</taxon>
        <taxon>Mycoplasmoidaceae</taxon>
        <taxon>Mycoplasmoides</taxon>
    </lineage>
</organism>
<protein>
    <recommendedName>
        <fullName>Uncharacterized lipoprotein MG095 homolog</fullName>
    </recommendedName>
</protein>
<accession>P75538</accession>
<comment type="subcellular location">
    <subcellularLocation>
        <location evidence="1">Cell membrane</location>
        <topology evidence="1">Lipid-anchor</topology>
    </subcellularLocation>
</comment>
<dbReference type="EMBL" id="U00089">
    <property type="protein sequence ID" value="AAB96246.1"/>
    <property type="molecule type" value="Genomic_DNA"/>
</dbReference>
<dbReference type="PIR" id="S73924">
    <property type="entry name" value="S73924"/>
</dbReference>
<dbReference type="RefSeq" id="NP_109921.1">
    <property type="nucleotide sequence ID" value="NC_000912.1"/>
</dbReference>
<dbReference type="RefSeq" id="WP_010874590.1">
    <property type="nucleotide sequence ID" value="NC_000912.1"/>
</dbReference>
<dbReference type="SMR" id="P75538"/>
<dbReference type="STRING" id="272634.MPN_233"/>
<dbReference type="EnsemblBacteria" id="AAB96246">
    <property type="protein sequence ID" value="AAB96246"/>
    <property type="gene ID" value="MPN_233"/>
</dbReference>
<dbReference type="KEGG" id="mpn:MPN_233"/>
<dbReference type="PATRIC" id="fig|272634.6.peg.252"/>
<dbReference type="HOGENOM" id="CLU_692268_0_0_14"/>
<dbReference type="OrthoDB" id="9963286at2"/>
<dbReference type="BioCyc" id="MPNE272634:G1GJ3-372-MONOMER"/>
<dbReference type="Proteomes" id="UP000000808">
    <property type="component" value="Chromosome"/>
</dbReference>
<dbReference type="GO" id="GO:0005886">
    <property type="term" value="C:plasma membrane"/>
    <property type="evidence" value="ECO:0007669"/>
    <property type="project" value="UniProtKB-SubCell"/>
</dbReference>
<dbReference type="PROSITE" id="PS51257">
    <property type="entry name" value="PROKAR_LIPOPROTEIN"/>
    <property type="match status" value="1"/>
</dbReference>